<keyword id="KW-0963">Cytoplasm</keyword>
<keyword id="KW-0507">mRNA processing</keyword>
<keyword id="KW-0539">Nucleus</keyword>
<keyword id="KW-1185">Reference proteome</keyword>
<keyword id="KW-0677">Repeat</keyword>
<keyword id="KW-0694">RNA-binding</keyword>
<sequence>MATNFTPISSSLYVGDLLPEVSEQHLFEIFNQVGLVSNIRVCRDTNTRRSLSYAYVNYYNGADAERALDTLNNTPIRGKACRIMWSQRDPSLRKSGVGNVFIKNLDKGIDHKALYDTFSAFGNILSCKVVTDDGNSSKGFGFVHYETQESADKAIAKVNGMMINGQKVFVGPFKSSKERGQPTEVKFTNVFFKNLSEDVGPDQLKELLQQYGEITNITIMADDKGKSKGFGFANFESAEAAKNVVENENGKIFHGKPIYAGRAQKKIEREAELKHTFETKYQGVNLYIKNIDDSIDNDKLREVFSQFGTITSAIVMKDDKATTSKGFGFVCYTAPDEATRAVTEMNGRMIGTKPLYVALAQRKDIRRAQLEMQHQQKFKTGIRQQMPPTYGSGPVFFTPAPVNPQVVYQQMMPRPRNWNGQPVGVPQGQYANMNYARGQPRQNGPRQNGGQPRQNGPRPDVSGAQPIPVQQQTTLDVAQTQQAASSAESALNLQSIINLPSRDQQNVALGEHLYPLIHNSQPDLAGKITGMLLDSLPVEELFTLTQRQDLLADKIREALEVLGSN</sequence>
<proteinExistence type="evidence at protein level"/>
<name>PAP1A_DICDI</name>
<gene>
    <name type="primary">pabpc1A</name>
    <name type="ORF">DDB_G0293558</name>
</gene>
<protein>
    <recommendedName>
        <fullName>Polyadenylate-binding protein 1-A</fullName>
        <shortName>PABP-1-A</shortName>
        <shortName>Poly(A)-binding protein, cytoplasmic 1-A</shortName>
    </recommendedName>
</protein>
<comment type="function">
    <text evidence="1">Binds the poly(A) tail of mRNA. Appears to be an important mediator of the multiple roles of the poly(A) tail in mRNA biogenesis, stability and translation (By similarity).</text>
</comment>
<comment type="subcellular location">
    <subcellularLocation>
        <location evidence="1">Cytoplasm</location>
    </subcellularLocation>
    <subcellularLocation>
        <location evidence="1">Nucleus</location>
    </subcellularLocation>
</comment>
<comment type="similarity">
    <text evidence="5">Belongs to the polyadenylate-binding protein type-1 family.</text>
</comment>
<evidence type="ECO:0000250" key="1"/>
<evidence type="ECO:0000255" key="2">
    <source>
        <dbReference type="PROSITE-ProRule" id="PRU00176"/>
    </source>
</evidence>
<evidence type="ECO:0000255" key="3">
    <source>
        <dbReference type="PROSITE-ProRule" id="PRU00641"/>
    </source>
</evidence>
<evidence type="ECO:0000256" key="4">
    <source>
        <dbReference type="SAM" id="MobiDB-lite"/>
    </source>
</evidence>
<evidence type="ECO:0000305" key="5"/>
<reference key="1">
    <citation type="journal article" date="2005" name="Nature">
        <title>The genome of the social amoeba Dictyostelium discoideum.</title>
        <authorList>
            <person name="Eichinger L."/>
            <person name="Pachebat J.A."/>
            <person name="Gloeckner G."/>
            <person name="Rajandream M.A."/>
            <person name="Sucgang R."/>
            <person name="Berriman M."/>
            <person name="Song J."/>
            <person name="Olsen R."/>
            <person name="Szafranski K."/>
            <person name="Xu Q."/>
            <person name="Tunggal B."/>
            <person name="Kummerfeld S."/>
            <person name="Madera M."/>
            <person name="Konfortov B.A."/>
            <person name="Rivero F."/>
            <person name="Bankier A.T."/>
            <person name="Lehmann R."/>
            <person name="Hamlin N."/>
            <person name="Davies R."/>
            <person name="Gaudet P."/>
            <person name="Fey P."/>
            <person name="Pilcher K."/>
            <person name="Chen G."/>
            <person name="Saunders D."/>
            <person name="Sodergren E.J."/>
            <person name="Davis P."/>
            <person name="Kerhornou A."/>
            <person name="Nie X."/>
            <person name="Hall N."/>
            <person name="Anjard C."/>
            <person name="Hemphill L."/>
            <person name="Bason N."/>
            <person name="Farbrother P."/>
            <person name="Desany B."/>
            <person name="Just E."/>
            <person name="Morio T."/>
            <person name="Rost R."/>
            <person name="Churcher C.M."/>
            <person name="Cooper J."/>
            <person name="Haydock S."/>
            <person name="van Driessche N."/>
            <person name="Cronin A."/>
            <person name="Goodhead I."/>
            <person name="Muzny D.M."/>
            <person name="Mourier T."/>
            <person name="Pain A."/>
            <person name="Lu M."/>
            <person name="Harper D."/>
            <person name="Lindsay R."/>
            <person name="Hauser H."/>
            <person name="James K.D."/>
            <person name="Quiles M."/>
            <person name="Madan Babu M."/>
            <person name="Saito T."/>
            <person name="Buchrieser C."/>
            <person name="Wardroper A."/>
            <person name="Felder M."/>
            <person name="Thangavelu M."/>
            <person name="Johnson D."/>
            <person name="Knights A."/>
            <person name="Loulseged H."/>
            <person name="Mungall K.L."/>
            <person name="Oliver K."/>
            <person name="Price C."/>
            <person name="Quail M.A."/>
            <person name="Urushihara H."/>
            <person name="Hernandez J."/>
            <person name="Rabbinowitsch E."/>
            <person name="Steffen D."/>
            <person name="Sanders M."/>
            <person name="Ma J."/>
            <person name="Kohara Y."/>
            <person name="Sharp S."/>
            <person name="Simmonds M.N."/>
            <person name="Spiegler S."/>
            <person name="Tivey A."/>
            <person name="Sugano S."/>
            <person name="White B."/>
            <person name="Walker D."/>
            <person name="Woodward J.R."/>
            <person name="Winckler T."/>
            <person name="Tanaka Y."/>
            <person name="Shaulsky G."/>
            <person name="Schleicher M."/>
            <person name="Weinstock G.M."/>
            <person name="Rosenthal A."/>
            <person name="Cox E.C."/>
            <person name="Chisholm R.L."/>
            <person name="Gibbs R.A."/>
            <person name="Loomis W.F."/>
            <person name="Platzer M."/>
            <person name="Kay R.R."/>
            <person name="Williams J.G."/>
            <person name="Dear P.H."/>
            <person name="Noegel A.A."/>
            <person name="Barrell B.G."/>
            <person name="Kuspa A."/>
        </authorList>
    </citation>
    <scope>NUCLEOTIDE SEQUENCE [LARGE SCALE GENOMIC DNA]</scope>
    <source>
        <strain>AX4</strain>
    </source>
</reference>
<reference key="2">
    <citation type="journal article" date="2006" name="Mol. Cell. Proteomics">
        <title>Proteomics fingerprinting of phagosome maturation and evidence for the role of a Galpha during uptake.</title>
        <authorList>
            <person name="Gotthardt D."/>
            <person name="Blancheteau V."/>
            <person name="Bosserhoff A."/>
            <person name="Ruppert T."/>
            <person name="Delorenzi M."/>
            <person name="Soldati T."/>
        </authorList>
    </citation>
    <scope>IDENTIFICATION BY MASS SPECTROMETRY [LARGE SCALE ANALYSIS]</scope>
    <source>
        <strain>AX2</strain>
    </source>
</reference>
<organism>
    <name type="scientific">Dictyostelium discoideum</name>
    <name type="common">Social amoeba</name>
    <dbReference type="NCBI Taxonomy" id="44689"/>
    <lineage>
        <taxon>Eukaryota</taxon>
        <taxon>Amoebozoa</taxon>
        <taxon>Evosea</taxon>
        <taxon>Eumycetozoa</taxon>
        <taxon>Dictyostelia</taxon>
        <taxon>Dictyosteliales</taxon>
        <taxon>Dictyosteliaceae</taxon>
        <taxon>Dictyostelium</taxon>
    </lineage>
</organism>
<feature type="chain" id="PRO_0000328600" description="Polyadenylate-binding protein 1-A">
    <location>
        <begin position="1"/>
        <end position="565"/>
    </location>
</feature>
<feature type="domain" description="RRM 1" evidence="2">
    <location>
        <begin position="10"/>
        <end position="88"/>
    </location>
</feature>
<feature type="domain" description="RRM 2" evidence="2">
    <location>
        <begin position="98"/>
        <end position="175"/>
    </location>
</feature>
<feature type="domain" description="RRM 3" evidence="2">
    <location>
        <begin position="188"/>
        <end position="265"/>
    </location>
</feature>
<feature type="domain" description="RRM 4" evidence="2">
    <location>
        <begin position="284"/>
        <end position="362"/>
    </location>
</feature>
<feature type="domain" description="PABC" evidence="3">
    <location>
        <begin position="489"/>
        <end position="565"/>
    </location>
</feature>
<feature type="region of interest" description="Disordered" evidence="4">
    <location>
        <begin position="435"/>
        <end position="466"/>
    </location>
</feature>
<feature type="compositionally biased region" description="Polar residues" evidence="4">
    <location>
        <begin position="440"/>
        <end position="454"/>
    </location>
</feature>
<accession>Q54BM2</accession>
<dbReference type="EMBL" id="AAFI02000218">
    <property type="protein sequence ID" value="EAL60591.1"/>
    <property type="molecule type" value="Genomic_DNA"/>
</dbReference>
<dbReference type="RefSeq" id="XP_629007.1">
    <property type="nucleotide sequence ID" value="XM_629005.1"/>
</dbReference>
<dbReference type="SMR" id="Q54BM2"/>
<dbReference type="FunCoup" id="Q54BM2">
    <property type="interactions" value="812"/>
</dbReference>
<dbReference type="STRING" id="44689.Q54BM2"/>
<dbReference type="PaxDb" id="44689-DDB0233359"/>
<dbReference type="EnsemblProtists" id="EAL60591">
    <property type="protein sequence ID" value="EAL60591"/>
    <property type="gene ID" value="DDB_G0293558"/>
</dbReference>
<dbReference type="GeneID" id="8629291"/>
<dbReference type="KEGG" id="ddi:DDB_G0293558"/>
<dbReference type="dictyBase" id="DDB_G0293558">
    <property type="gene designation" value="pabpc1A"/>
</dbReference>
<dbReference type="VEuPathDB" id="AmoebaDB:DDB_G0293558"/>
<dbReference type="eggNOG" id="KOG0123">
    <property type="taxonomic scope" value="Eukaryota"/>
</dbReference>
<dbReference type="HOGENOM" id="CLU_012062_22_2_1"/>
<dbReference type="InParanoid" id="Q54BM2"/>
<dbReference type="OMA" id="MNGRMLN"/>
<dbReference type="PhylomeDB" id="Q54BM2"/>
<dbReference type="PRO" id="PR:Q54BM2"/>
<dbReference type="Proteomes" id="UP000002195">
    <property type="component" value="Chromosome 6"/>
</dbReference>
<dbReference type="GO" id="GO:0005737">
    <property type="term" value="C:cytoplasm"/>
    <property type="evidence" value="ECO:0000250"/>
    <property type="project" value="dictyBase"/>
</dbReference>
<dbReference type="GO" id="GO:0005829">
    <property type="term" value="C:cytosol"/>
    <property type="evidence" value="ECO:0000318"/>
    <property type="project" value="GO_Central"/>
</dbReference>
<dbReference type="GO" id="GO:0005634">
    <property type="term" value="C:nucleus"/>
    <property type="evidence" value="ECO:0000318"/>
    <property type="project" value="GO_Central"/>
</dbReference>
<dbReference type="GO" id="GO:0045335">
    <property type="term" value="C:phagocytic vesicle"/>
    <property type="evidence" value="ECO:0007005"/>
    <property type="project" value="dictyBase"/>
</dbReference>
<dbReference type="GO" id="GO:1990904">
    <property type="term" value="C:ribonucleoprotein complex"/>
    <property type="evidence" value="ECO:0000318"/>
    <property type="project" value="GO_Central"/>
</dbReference>
<dbReference type="GO" id="GO:0003730">
    <property type="term" value="F:mRNA 3'-UTR binding"/>
    <property type="evidence" value="ECO:0000318"/>
    <property type="project" value="GO_Central"/>
</dbReference>
<dbReference type="GO" id="GO:0008143">
    <property type="term" value="F:poly(A) binding"/>
    <property type="evidence" value="ECO:0000318"/>
    <property type="project" value="GO_Central"/>
</dbReference>
<dbReference type="GO" id="GO:0008266">
    <property type="term" value="F:poly(U) RNA binding"/>
    <property type="evidence" value="ECO:0000318"/>
    <property type="project" value="GO_Central"/>
</dbReference>
<dbReference type="GO" id="GO:0006397">
    <property type="term" value="P:mRNA processing"/>
    <property type="evidence" value="ECO:0007669"/>
    <property type="project" value="UniProtKB-KW"/>
</dbReference>
<dbReference type="CDD" id="cd12378">
    <property type="entry name" value="RRM1_I_PABPs"/>
    <property type="match status" value="1"/>
</dbReference>
<dbReference type="CDD" id="cd12379">
    <property type="entry name" value="RRM2_I_PABPs"/>
    <property type="match status" value="1"/>
</dbReference>
<dbReference type="CDD" id="cd12380">
    <property type="entry name" value="RRM3_I_PABPs"/>
    <property type="match status" value="1"/>
</dbReference>
<dbReference type="CDD" id="cd12381">
    <property type="entry name" value="RRM4_I_PABPs"/>
    <property type="match status" value="1"/>
</dbReference>
<dbReference type="FunFam" id="3.30.70.330:FF:001735">
    <property type="match status" value="1"/>
</dbReference>
<dbReference type="FunFam" id="3.30.70.330:FF:000003">
    <property type="entry name" value="Polyadenylate-binding protein"/>
    <property type="match status" value="1"/>
</dbReference>
<dbReference type="FunFam" id="3.30.70.330:FF:000091">
    <property type="entry name" value="Polyadenylate-binding protein"/>
    <property type="match status" value="1"/>
</dbReference>
<dbReference type="FunFam" id="3.30.70.330:FF:000520">
    <property type="entry name" value="Polyadenylate-binding protein"/>
    <property type="match status" value="1"/>
</dbReference>
<dbReference type="Gene3D" id="3.30.70.330">
    <property type="match status" value="4"/>
</dbReference>
<dbReference type="Gene3D" id="1.10.1900.10">
    <property type="entry name" value="c-terminal domain of poly(a) binding protein"/>
    <property type="match status" value="1"/>
</dbReference>
<dbReference type="InterPro" id="IPR012677">
    <property type="entry name" value="Nucleotide-bd_a/b_plait_sf"/>
</dbReference>
<dbReference type="InterPro" id="IPR036053">
    <property type="entry name" value="PABP-dom"/>
</dbReference>
<dbReference type="InterPro" id="IPR006515">
    <property type="entry name" value="PABP_1234"/>
</dbReference>
<dbReference type="InterPro" id="IPR002004">
    <property type="entry name" value="PABP_HYD_C"/>
</dbReference>
<dbReference type="InterPro" id="IPR034364">
    <property type="entry name" value="PABP_RRM1"/>
</dbReference>
<dbReference type="InterPro" id="IPR035979">
    <property type="entry name" value="RBD_domain_sf"/>
</dbReference>
<dbReference type="InterPro" id="IPR045305">
    <property type="entry name" value="RRM2_I_PABPs"/>
</dbReference>
<dbReference type="InterPro" id="IPR000504">
    <property type="entry name" value="RRM_dom"/>
</dbReference>
<dbReference type="InterPro" id="IPR003954">
    <property type="entry name" value="RRM_dom_euk"/>
</dbReference>
<dbReference type="NCBIfam" id="TIGR01628">
    <property type="entry name" value="PABP-1234"/>
    <property type="match status" value="1"/>
</dbReference>
<dbReference type="PANTHER" id="PTHR24012">
    <property type="entry name" value="RNA BINDING PROTEIN"/>
    <property type="match status" value="1"/>
</dbReference>
<dbReference type="Pfam" id="PF00658">
    <property type="entry name" value="MLLE"/>
    <property type="match status" value="1"/>
</dbReference>
<dbReference type="Pfam" id="PF00076">
    <property type="entry name" value="RRM_1"/>
    <property type="match status" value="4"/>
</dbReference>
<dbReference type="SMART" id="SM00517">
    <property type="entry name" value="PolyA"/>
    <property type="match status" value="1"/>
</dbReference>
<dbReference type="SMART" id="SM00360">
    <property type="entry name" value="RRM"/>
    <property type="match status" value="4"/>
</dbReference>
<dbReference type="SMART" id="SM00361">
    <property type="entry name" value="RRM_1"/>
    <property type="match status" value="4"/>
</dbReference>
<dbReference type="SUPFAM" id="SSF63570">
    <property type="entry name" value="PABC (PABP) domain"/>
    <property type="match status" value="1"/>
</dbReference>
<dbReference type="SUPFAM" id="SSF54928">
    <property type="entry name" value="RNA-binding domain, RBD"/>
    <property type="match status" value="2"/>
</dbReference>
<dbReference type="PROSITE" id="PS51309">
    <property type="entry name" value="PABC"/>
    <property type="match status" value="1"/>
</dbReference>
<dbReference type="PROSITE" id="PS50102">
    <property type="entry name" value="RRM"/>
    <property type="match status" value="4"/>
</dbReference>